<reference key="1">
    <citation type="journal article" date="1997" name="J. Biol. Chem.">
        <title>Glycogenin-2, a novel self-glucosylating protein involved in liver glycogen biosynthesis.</title>
        <authorList>
            <person name="Mu J."/>
            <person name="Skurat A.V."/>
            <person name="Roach P.J."/>
        </authorList>
    </citation>
    <scope>NUCLEOTIDE SEQUENCE [MRNA]</scope>
    <scope>ALTERNATIVE SPLICING</scope>
    <scope>CATALYTIC ACTIVITY</scope>
    <scope>FUNCTION</scope>
    <scope>PATHWAY</scope>
    <scope>TISSUE SPECIFICITY</scope>
    <source>
        <tissue>Liver</tissue>
    </source>
</reference>
<reference key="2">
    <citation type="journal article" date="2000" name="Gene">
        <title>Structure and chromosomal localization of the human glycogenin-2 gene GYG2.</title>
        <authorList>
            <person name="Zhai L."/>
            <person name="Mu J."/>
            <person name="Zong H."/>
            <person name="DePaoli-Roach A.A."/>
            <person name="Roach P.J."/>
        </authorList>
    </citation>
    <scope>NUCLEOTIDE SEQUENCE [GENOMIC DNA]</scope>
</reference>
<reference key="3">
    <citation type="journal article" date="2005" name="Nature">
        <title>The DNA sequence of the human X chromosome.</title>
        <authorList>
            <person name="Ross M.T."/>
            <person name="Grafham D.V."/>
            <person name="Coffey A.J."/>
            <person name="Scherer S."/>
            <person name="McLay K."/>
            <person name="Muzny D."/>
            <person name="Platzer M."/>
            <person name="Howell G.R."/>
            <person name="Burrows C."/>
            <person name="Bird C.P."/>
            <person name="Frankish A."/>
            <person name="Lovell F.L."/>
            <person name="Howe K.L."/>
            <person name="Ashurst J.L."/>
            <person name="Fulton R.S."/>
            <person name="Sudbrak R."/>
            <person name="Wen G."/>
            <person name="Jones M.C."/>
            <person name="Hurles M.E."/>
            <person name="Andrews T.D."/>
            <person name="Scott C.E."/>
            <person name="Searle S."/>
            <person name="Ramser J."/>
            <person name="Whittaker A."/>
            <person name="Deadman R."/>
            <person name="Carter N.P."/>
            <person name="Hunt S.E."/>
            <person name="Chen R."/>
            <person name="Cree A."/>
            <person name="Gunaratne P."/>
            <person name="Havlak P."/>
            <person name="Hodgson A."/>
            <person name="Metzker M.L."/>
            <person name="Richards S."/>
            <person name="Scott G."/>
            <person name="Steffen D."/>
            <person name="Sodergren E."/>
            <person name="Wheeler D.A."/>
            <person name="Worley K.C."/>
            <person name="Ainscough R."/>
            <person name="Ambrose K.D."/>
            <person name="Ansari-Lari M.A."/>
            <person name="Aradhya S."/>
            <person name="Ashwell R.I."/>
            <person name="Babbage A.K."/>
            <person name="Bagguley C.L."/>
            <person name="Ballabio A."/>
            <person name="Banerjee R."/>
            <person name="Barker G.E."/>
            <person name="Barlow K.F."/>
            <person name="Barrett I.P."/>
            <person name="Bates K.N."/>
            <person name="Beare D.M."/>
            <person name="Beasley H."/>
            <person name="Beasley O."/>
            <person name="Beck A."/>
            <person name="Bethel G."/>
            <person name="Blechschmidt K."/>
            <person name="Brady N."/>
            <person name="Bray-Allen S."/>
            <person name="Bridgeman A.M."/>
            <person name="Brown A.J."/>
            <person name="Brown M.J."/>
            <person name="Bonnin D."/>
            <person name="Bruford E.A."/>
            <person name="Buhay C."/>
            <person name="Burch P."/>
            <person name="Burford D."/>
            <person name="Burgess J."/>
            <person name="Burrill W."/>
            <person name="Burton J."/>
            <person name="Bye J.M."/>
            <person name="Carder C."/>
            <person name="Carrel L."/>
            <person name="Chako J."/>
            <person name="Chapman J.C."/>
            <person name="Chavez D."/>
            <person name="Chen E."/>
            <person name="Chen G."/>
            <person name="Chen Y."/>
            <person name="Chen Z."/>
            <person name="Chinault C."/>
            <person name="Ciccodicola A."/>
            <person name="Clark S.Y."/>
            <person name="Clarke G."/>
            <person name="Clee C.M."/>
            <person name="Clegg S."/>
            <person name="Clerc-Blankenburg K."/>
            <person name="Clifford K."/>
            <person name="Cobley V."/>
            <person name="Cole C.G."/>
            <person name="Conquer J.S."/>
            <person name="Corby N."/>
            <person name="Connor R.E."/>
            <person name="David R."/>
            <person name="Davies J."/>
            <person name="Davis C."/>
            <person name="Davis J."/>
            <person name="Delgado O."/>
            <person name="Deshazo D."/>
            <person name="Dhami P."/>
            <person name="Ding Y."/>
            <person name="Dinh H."/>
            <person name="Dodsworth S."/>
            <person name="Draper H."/>
            <person name="Dugan-Rocha S."/>
            <person name="Dunham A."/>
            <person name="Dunn M."/>
            <person name="Durbin K.J."/>
            <person name="Dutta I."/>
            <person name="Eades T."/>
            <person name="Ellwood M."/>
            <person name="Emery-Cohen A."/>
            <person name="Errington H."/>
            <person name="Evans K.L."/>
            <person name="Faulkner L."/>
            <person name="Francis F."/>
            <person name="Frankland J."/>
            <person name="Fraser A.E."/>
            <person name="Galgoczy P."/>
            <person name="Gilbert J."/>
            <person name="Gill R."/>
            <person name="Gloeckner G."/>
            <person name="Gregory S.G."/>
            <person name="Gribble S."/>
            <person name="Griffiths C."/>
            <person name="Grocock R."/>
            <person name="Gu Y."/>
            <person name="Gwilliam R."/>
            <person name="Hamilton C."/>
            <person name="Hart E.A."/>
            <person name="Hawes A."/>
            <person name="Heath P.D."/>
            <person name="Heitmann K."/>
            <person name="Hennig S."/>
            <person name="Hernandez J."/>
            <person name="Hinzmann B."/>
            <person name="Ho S."/>
            <person name="Hoffs M."/>
            <person name="Howden P.J."/>
            <person name="Huckle E.J."/>
            <person name="Hume J."/>
            <person name="Hunt P.J."/>
            <person name="Hunt A.R."/>
            <person name="Isherwood J."/>
            <person name="Jacob L."/>
            <person name="Johnson D."/>
            <person name="Jones S."/>
            <person name="de Jong P.J."/>
            <person name="Joseph S.S."/>
            <person name="Keenan S."/>
            <person name="Kelly S."/>
            <person name="Kershaw J.K."/>
            <person name="Khan Z."/>
            <person name="Kioschis P."/>
            <person name="Klages S."/>
            <person name="Knights A.J."/>
            <person name="Kosiura A."/>
            <person name="Kovar-Smith C."/>
            <person name="Laird G.K."/>
            <person name="Langford C."/>
            <person name="Lawlor S."/>
            <person name="Leversha M."/>
            <person name="Lewis L."/>
            <person name="Liu W."/>
            <person name="Lloyd C."/>
            <person name="Lloyd D.M."/>
            <person name="Loulseged H."/>
            <person name="Loveland J.E."/>
            <person name="Lovell J.D."/>
            <person name="Lozado R."/>
            <person name="Lu J."/>
            <person name="Lyne R."/>
            <person name="Ma J."/>
            <person name="Maheshwari M."/>
            <person name="Matthews L.H."/>
            <person name="McDowall J."/>
            <person name="McLaren S."/>
            <person name="McMurray A."/>
            <person name="Meidl P."/>
            <person name="Meitinger T."/>
            <person name="Milne S."/>
            <person name="Miner G."/>
            <person name="Mistry S.L."/>
            <person name="Morgan M."/>
            <person name="Morris S."/>
            <person name="Mueller I."/>
            <person name="Mullikin J.C."/>
            <person name="Nguyen N."/>
            <person name="Nordsiek G."/>
            <person name="Nyakatura G."/>
            <person name="O'dell C.N."/>
            <person name="Okwuonu G."/>
            <person name="Palmer S."/>
            <person name="Pandian R."/>
            <person name="Parker D."/>
            <person name="Parrish J."/>
            <person name="Pasternak S."/>
            <person name="Patel D."/>
            <person name="Pearce A.V."/>
            <person name="Pearson D.M."/>
            <person name="Pelan S.E."/>
            <person name="Perez L."/>
            <person name="Porter K.M."/>
            <person name="Ramsey Y."/>
            <person name="Reichwald K."/>
            <person name="Rhodes S."/>
            <person name="Ridler K.A."/>
            <person name="Schlessinger D."/>
            <person name="Schueler M.G."/>
            <person name="Sehra H.K."/>
            <person name="Shaw-Smith C."/>
            <person name="Shen H."/>
            <person name="Sheridan E.M."/>
            <person name="Shownkeen R."/>
            <person name="Skuce C.D."/>
            <person name="Smith M.L."/>
            <person name="Sotheran E.C."/>
            <person name="Steingruber H.E."/>
            <person name="Steward C.A."/>
            <person name="Storey R."/>
            <person name="Swann R.M."/>
            <person name="Swarbreck D."/>
            <person name="Tabor P.E."/>
            <person name="Taudien S."/>
            <person name="Taylor T."/>
            <person name="Teague B."/>
            <person name="Thomas K."/>
            <person name="Thorpe A."/>
            <person name="Timms K."/>
            <person name="Tracey A."/>
            <person name="Trevanion S."/>
            <person name="Tromans A.C."/>
            <person name="d'Urso M."/>
            <person name="Verduzco D."/>
            <person name="Villasana D."/>
            <person name="Waldron L."/>
            <person name="Wall M."/>
            <person name="Wang Q."/>
            <person name="Warren J."/>
            <person name="Warry G.L."/>
            <person name="Wei X."/>
            <person name="West A."/>
            <person name="Whitehead S.L."/>
            <person name="Whiteley M.N."/>
            <person name="Wilkinson J.E."/>
            <person name="Willey D.L."/>
            <person name="Williams G."/>
            <person name="Williams L."/>
            <person name="Williamson A."/>
            <person name="Williamson H."/>
            <person name="Wilming L."/>
            <person name="Woodmansey R.L."/>
            <person name="Wray P.W."/>
            <person name="Yen J."/>
            <person name="Zhang J."/>
            <person name="Zhou J."/>
            <person name="Zoghbi H."/>
            <person name="Zorilla S."/>
            <person name="Buck D."/>
            <person name="Reinhardt R."/>
            <person name="Poustka A."/>
            <person name="Rosenthal A."/>
            <person name="Lehrach H."/>
            <person name="Meindl A."/>
            <person name="Minx P.J."/>
            <person name="Hillier L.W."/>
            <person name="Willard H.F."/>
            <person name="Wilson R.K."/>
            <person name="Waterston R.H."/>
            <person name="Rice C.M."/>
            <person name="Vaudin M."/>
            <person name="Coulson A."/>
            <person name="Nelson D.L."/>
            <person name="Weinstock G."/>
            <person name="Sulston J.E."/>
            <person name="Durbin R.M."/>
            <person name="Hubbard T."/>
            <person name="Gibbs R.A."/>
            <person name="Beck S."/>
            <person name="Rogers J."/>
            <person name="Bentley D.R."/>
        </authorList>
    </citation>
    <scope>NUCLEOTIDE SEQUENCE [LARGE SCALE GENOMIC DNA]</scope>
</reference>
<reference key="4">
    <citation type="journal article" date="2004" name="Genome Res.">
        <title>The status, quality, and expansion of the NIH full-length cDNA project: the Mammalian Gene Collection (MGC).</title>
        <authorList>
            <consortium name="The MGC Project Team"/>
        </authorList>
    </citation>
    <scope>NUCLEOTIDE SEQUENCE [LARGE SCALE MRNA] (ISOFORM BETA)</scope>
    <scope>VARIANT ARG-313</scope>
    <source>
        <tissue>Skin</tissue>
    </source>
</reference>
<reference key="5">
    <citation type="journal article" date="1998" name="J. Biol. Chem.">
        <title>Characterization of human glycogenin-2, a self-glucosylating initiator of liver glycogen metabolism.</title>
        <authorList>
            <person name="Mu J."/>
            <person name="Roach P.J."/>
        </authorList>
    </citation>
    <scope>GLYCOSYLATION AT TYR-228</scope>
    <scope>MUTAGENESIS OF TYR-228 AND TYR-230</scope>
    <scope>CATALYTIC ACTIVITY</scope>
    <scope>PATHWAY</scope>
    <scope>FUNCTION</scope>
    <scope>TISSUE SPECIFICITY</scope>
</reference>
<reference key="6">
    <citation type="journal article" date="2002" name="Proteomics">
        <title>Cluster analysis of an extensive human breast cancer cell line protein expression map database.</title>
        <authorList>
            <person name="Harris R.A."/>
            <person name="Yang A."/>
            <person name="Stein R.C."/>
            <person name="Lucy K."/>
            <person name="Brusten L."/>
            <person name="Herath A."/>
            <person name="Parekh R."/>
            <person name="Waterfield M.D."/>
            <person name="O'Hare M.J."/>
            <person name="Neville M.A."/>
            <person name="Page M.J."/>
            <person name="Zvelebil M.J."/>
        </authorList>
    </citation>
    <scope>MASS SPECTROMETRY</scope>
    <source>
        <tissue>Mammary cancer</tissue>
    </source>
</reference>
<reference key="7">
    <citation type="journal article" date="2014" name="J. Proteomics">
        <title>An enzyme assisted RP-RPLC approach for in-depth analysis of human liver phosphoproteome.</title>
        <authorList>
            <person name="Bian Y."/>
            <person name="Song C."/>
            <person name="Cheng K."/>
            <person name="Dong M."/>
            <person name="Wang F."/>
            <person name="Huang J."/>
            <person name="Sun D."/>
            <person name="Wang L."/>
            <person name="Ye M."/>
            <person name="Zou H."/>
        </authorList>
    </citation>
    <scope>PHOSPHORYLATION [LARGE SCALE ANALYSIS] AT SER-368; SER-399 AND SER-459</scope>
    <scope>IDENTIFICATION BY MASS SPECTROMETRY [LARGE SCALE ANALYSIS]</scope>
    <source>
        <tissue>Liver</tissue>
    </source>
</reference>
<reference evidence="11" key="8">
    <citation type="submission" date="2014-12" db="PDB data bank">
        <title>Crystal Structure of Human Glycogenin-2 Catalytic Domain.</title>
        <authorList>
            <person name="Fairhead M."/>
            <person name="Strain-Damerell C."/>
            <person name="Krojer T."/>
            <person name="Froese D.S."/>
            <person name="Kopec J."/>
            <person name="Nowak R."/>
            <person name="Burgess-Brown N."/>
            <person name="von Delft F."/>
            <person name="Arrowsmith C."/>
            <person name="Edwards A."/>
            <person name="Bountra C."/>
            <person name="Yue W.W."/>
        </authorList>
    </citation>
    <scope>X-RAY CRYSTALLOGRAPHY (1.93 ANGSTROMS) OF 35-300</scope>
</reference>
<reference key="9">
    <citation type="journal article" date="2011" name="Nature">
        <title>Exome sequencing identifies frequent mutation of the SWI/SNF complex gene PBRM1 in renal carcinoma.</title>
        <authorList>
            <person name="Varela I."/>
            <person name="Tarpey P."/>
            <person name="Raine K."/>
            <person name="Huang D."/>
            <person name="Ong C.K."/>
            <person name="Stephens P."/>
            <person name="Davies H."/>
            <person name="Jones D."/>
            <person name="Lin M.L."/>
            <person name="Teague J."/>
            <person name="Bignell G."/>
            <person name="Butler A."/>
            <person name="Cho J."/>
            <person name="Dalgliesh G.L."/>
            <person name="Galappaththige D."/>
            <person name="Greenman C."/>
            <person name="Hardy C."/>
            <person name="Jia M."/>
            <person name="Latimer C."/>
            <person name="Lau K.W."/>
            <person name="Marshall J."/>
            <person name="McLaren S."/>
            <person name="Menzies A."/>
            <person name="Mudie L."/>
            <person name="Stebbings L."/>
            <person name="Largaespada D.A."/>
            <person name="Wessels L.F.A."/>
            <person name="Richard S."/>
            <person name="Kahnoski R.J."/>
            <person name="Anema J."/>
            <person name="Tuveson D.A."/>
            <person name="Perez-Mancera P.A."/>
            <person name="Mustonen V."/>
            <person name="Fischer A."/>
            <person name="Adams D.J."/>
            <person name="Rust A."/>
            <person name="Chan-On W."/>
            <person name="Subimerb C."/>
            <person name="Dykema K."/>
            <person name="Furge K."/>
            <person name="Campbell P.J."/>
            <person name="Teh B.T."/>
            <person name="Stratton M.R."/>
            <person name="Futreal P.A."/>
        </authorList>
    </citation>
    <scope>VARIANT ARG-194</scope>
</reference>
<proteinExistence type="evidence at protein level"/>
<feature type="chain" id="PRO_0000215180" description="Glycogenin-2">
    <location>
        <begin position="1"/>
        <end position="501"/>
    </location>
</feature>
<feature type="binding site" evidence="3">
    <location>
        <position position="42"/>
    </location>
    <ligand>
        <name>UDP</name>
        <dbReference type="ChEBI" id="CHEBI:58223"/>
    </ligand>
</feature>
<feature type="binding site" evidence="3">
    <location>
        <position position="42"/>
    </location>
    <ligand>
        <name>UDP-alpha-D-glucose</name>
        <dbReference type="ChEBI" id="CHEBI:58885"/>
    </ligand>
</feature>
<feature type="binding site" evidence="3">
    <location>
        <position position="44"/>
    </location>
    <ligand>
        <name>UDP</name>
        <dbReference type="ChEBI" id="CHEBI:58223"/>
    </ligand>
</feature>
<feature type="binding site" evidence="3">
    <location>
        <position position="44"/>
    </location>
    <ligand>
        <name>UDP-alpha-D-glucose</name>
        <dbReference type="ChEBI" id="CHEBI:58885"/>
    </ligand>
</feature>
<feature type="binding site" evidence="3">
    <location>
        <position position="45"/>
    </location>
    <ligand>
        <name>UDP</name>
        <dbReference type="ChEBI" id="CHEBI:58223"/>
    </ligand>
</feature>
<feature type="binding site" evidence="2">
    <location>
        <position position="45"/>
    </location>
    <ligand>
        <name>UDP-alpha-D-glucose</name>
        <dbReference type="ChEBI" id="CHEBI:58885"/>
    </ligand>
</feature>
<feature type="binding site" evidence="3">
    <location>
        <position position="48"/>
    </location>
    <ligand>
        <name>UDP</name>
        <dbReference type="ChEBI" id="CHEBI:58223"/>
    </ligand>
</feature>
<feature type="binding site" evidence="3">
    <location>
        <position position="48"/>
    </location>
    <ligand>
        <name>UDP-alpha-D-glucose</name>
        <dbReference type="ChEBI" id="CHEBI:58885"/>
    </ligand>
</feature>
<feature type="binding site" evidence="3">
    <location>
        <position position="110"/>
    </location>
    <ligand>
        <name>UDP</name>
        <dbReference type="ChEBI" id="CHEBI:58223"/>
    </ligand>
</feature>
<feature type="binding site" evidence="3">
    <location>
        <position position="110"/>
    </location>
    <ligand>
        <name>UDP-alpha-D-glucose</name>
        <dbReference type="ChEBI" id="CHEBI:58885"/>
    </ligand>
</feature>
<feature type="binding site" evidence="3">
    <location>
        <position position="119"/>
    </location>
    <ligand>
        <name>UDP-alpha-D-glucose</name>
        <dbReference type="ChEBI" id="CHEBI:58885"/>
    </ligand>
</feature>
<feature type="binding site" evidence="3">
    <location>
        <position position="135"/>
    </location>
    <ligand>
        <name>Mn(2+)</name>
        <dbReference type="ChEBI" id="CHEBI:29035"/>
    </ligand>
</feature>
<feature type="binding site" evidence="2">
    <location>
        <position position="135"/>
    </location>
    <ligand>
        <name>UDP</name>
        <dbReference type="ChEBI" id="CHEBI:58223"/>
    </ligand>
</feature>
<feature type="binding site" evidence="3">
    <location>
        <position position="135"/>
    </location>
    <ligand>
        <name>UDP-alpha-D-glucose</name>
        <dbReference type="ChEBI" id="CHEBI:58885"/>
    </ligand>
</feature>
<feature type="binding site" evidence="3">
    <location>
        <position position="136"/>
    </location>
    <ligand>
        <name>UDP</name>
        <dbReference type="ChEBI" id="CHEBI:58223"/>
    </ligand>
</feature>
<feature type="binding site" evidence="3">
    <location>
        <position position="136"/>
    </location>
    <ligand>
        <name>UDP-alpha-D-glucose</name>
        <dbReference type="ChEBI" id="CHEBI:58885"/>
    </ligand>
</feature>
<feature type="binding site" evidence="3">
    <location>
        <position position="137"/>
    </location>
    <ligand>
        <name>Mn(2+)</name>
        <dbReference type="ChEBI" id="CHEBI:29035"/>
    </ligand>
</feature>
<feature type="binding site" evidence="3">
    <location>
        <position position="137"/>
    </location>
    <ligand>
        <name>UDP</name>
        <dbReference type="ChEBI" id="CHEBI:58223"/>
    </ligand>
</feature>
<feature type="binding site" evidence="3">
    <location>
        <position position="137"/>
    </location>
    <ligand>
        <name>UDP-alpha-D-glucose</name>
        <dbReference type="ChEBI" id="CHEBI:58885"/>
    </ligand>
</feature>
<feature type="binding site" evidence="3">
    <location>
        <position position="166"/>
    </location>
    <ligand>
        <name>UDP-alpha-D-glucose</name>
        <dbReference type="ChEBI" id="CHEBI:58885"/>
    </ligand>
</feature>
<feature type="binding site" evidence="3">
    <location>
        <position position="167"/>
    </location>
    <ligand>
        <name>UDP-alpha-D-glucose</name>
        <dbReference type="ChEBI" id="CHEBI:58885"/>
    </ligand>
</feature>
<feature type="binding site" evidence="3">
    <location>
        <position position="193"/>
    </location>
    <ligand>
        <name>UDP-alpha-D-glucose</name>
        <dbReference type="ChEBI" id="CHEBI:58885"/>
    </ligand>
</feature>
<feature type="binding site" evidence="3">
    <location>
        <position position="196"/>
    </location>
    <ligand>
        <name>UDP-alpha-D-glucose</name>
        <dbReference type="ChEBI" id="CHEBI:58885"/>
    </ligand>
</feature>
<feature type="binding site" evidence="3">
    <location>
        <position position="197"/>
    </location>
    <ligand>
        <name>UDP-alpha-D-glucose</name>
        <dbReference type="ChEBI" id="CHEBI:58885"/>
    </ligand>
</feature>
<feature type="binding site" evidence="3">
    <location>
        <position position="245"/>
    </location>
    <ligand>
        <name>Mn(2+)</name>
        <dbReference type="ChEBI" id="CHEBI:29035"/>
    </ligand>
</feature>
<feature type="binding site" evidence="2">
    <location>
        <position position="245"/>
    </location>
    <ligand>
        <name>UDP</name>
        <dbReference type="ChEBI" id="CHEBI:58223"/>
    </ligand>
</feature>
<feature type="binding site" evidence="3">
    <location>
        <position position="248"/>
    </location>
    <ligand>
        <name>UDP</name>
        <dbReference type="ChEBI" id="CHEBI:58223"/>
    </ligand>
</feature>
<feature type="binding site" evidence="3">
    <location>
        <position position="248"/>
    </location>
    <ligand>
        <name>UDP-alpha-D-glucose</name>
        <dbReference type="ChEBI" id="CHEBI:58885"/>
    </ligand>
</feature>
<feature type="binding site" evidence="3">
    <location>
        <position position="251"/>
    </location>
    <ligand>
        <name>UDP</name>
        <dbReference type="ChEBI" id="CHEBI:58223"/>
    </ligand>
</feature>
<feature type="binding site" evidence="3">
    <location>
        <position position="251"/>
    </location>
    <ligand>
        <name>UDP-alpha-D-glucose</name>
        <dbReference type="ChEBI" id="CHEBI:58885"/>
    </ligand>
</feature>
<feature type="site" description="Important for catalytic activity" evidence="2">
    <location>
        <position position="119"/>
    </location>
</feature>
<feature type="modified residue" description="Phosphoserine" evidence="12">
    <location>
        <position position="368"/>
    </location>
</feature>
<feature type="modified residue" description="Phosphoserine" evidence="12">
    <location>
        <position position="399"/>
    </location>
</feature>
<feature type="modified residue" description="Phosphoserine" evidence="12">
    <location>
        <position position="459"/>
    </location>
</feature>
<feature type="glycosylation site" description="O-linked (Glc...) tyrosine" evidence="8">
    <location>
        <position position="228"/>
    </location>
</feature>
<feature type="splice variant" id="VSP_001771" description="In isoform Gamma." evidence="10">
    <location>
        <begin position="3"/>
        <end position="42"/>
    </location>
</feature>
<feature type="splice variant" id="VSP_001770" description="In isoform Beta." evidence="9">
    <location>
        <begin position="3"/>
        <end position="33"/>
    </location>
</feature>
<feature type="splice variant" id="VSP_001772" description="In isoform Delta." evidence="10">
    <location>
        <begin position="378"/>
        <end position="448"/>
    </location>
</feature>
<feature type="splice variant" id="VSP_001773" description="In isoform Epsilon." evidence="10">
    <location>
        <begin position="407"/>
        <end position="501"/>
    </location>
</feature>
<feature type="splice variant" id="VSP_001774" description="In isoform Zeta." evidence="10">
    <location>
        <begin position="413"/>
        <end position="448"/>
    </location>
</feature>
<feature type="sequence variant" id="VAR_053110" description="In dbSNP:rs11797037.">
    <original>H</original>
    <variation>Y</variation>
    <location>
        <position position="7"/>
    </location>
</feature>
<feature type="sequence variant" id="VAR_064717" description="Found in a renal cell carcinoma case; somatic mutation; dbSNP:rs200824650." evidence="6">
    <original>G</original>
    <variation>R</variation>
    <location>
        <position position="194"/>
    </location>
</feature>
<feature type="sequence variant" id="VAR_010401" description="In dbSNP:rs2306734.">
    <original>A</original>
    <variation>V</variation>
    <location>
        <position position="270"/>
    </location>
</feature>
<feature type="sequence variant" id="VAR_024457" description="In dbSNP:rs2306735." evidence="5">
    <original>H</original>
    <variation>R</variation>
    <location>
        <position position="313"/>
    </location>
</feature>
<feature type="sequence variant" id="VAR_031224" description="In dbSNP:rs17330993.">
    <original>R</original>
    <variation>C</variation>
    <location>
        <position position="373"/>
    </location>
</feature>
<feature type="mutagenesis site" description="Loss of autoglucosylation." evidence="8">
    <original>Y</original>
    <variation>F</variation>
    <location>
        <position position="228"/>
    </location>
</feature>
<feature type="mutagenesis site" description="No loss of activity." evidence="8">
    <original>Y</original>
    <variation>F</variation>
    <location>
        <position position="230"/>
    </location>
</feature>
<feature type="sequence conflict" description="In Ref. 1; AAB84378." evidence="10" ref="1">
    <location>
        <position position="413"/>
    </location>
</feature>
<feature type="sequence conflict" description="In Ref. 1; AAB84376." evidence="10" ref="1">
    <original>EKV</original>
    <variation>AGI</variation>
    <location>
        <begin position="462"/>
        <end position="464"/>
    </location>
</feature>
<feature type="strand" evidence="13">
    <location>
        <begin position="37"/>
        <end position="43"/>
    </location>
</feature>
<feature type="turn" evidence="13">
    <location>
        <begin position="46"/>
        <end position="48"/>
    </location>
</feature>
<feature type="helix" evidence="13">
    <location>
        <begin position="49"/>
        <end position="61"/>
    </location>
</feature>
<feature type="strand" evidence="13">
    <location>
        <begin position="66"/>
        <end position="72"/>
    </location>
</feature>
<feature type="helix" evidence="13">
    <location>
        <begin position="78"/>
        <end position="84"/>
    </location>
</feature>
<feature type="turn" evidence="13">
    <location>
        <begin position="85"/>
        <end position="87"/>
    </location>
</feature>
<feature type="strand" evidence="13">
    <location>
        <begin position="89"/>
        <end position="93"/>
    </location>
</feature>
<feature type="helix" evidence="13">
    <location>
        <begin position="101"/>
        <end position="109"/>
    </location>
</feature>
<feature type="helix" evidence="13">
    <location>
        <begin position="111"/>
        <end position="113"/>
    </location>
</feature>
<feature type="helix" evidence="13">
    <location>
        <begin position="114"/>
        <end position="120"/>
    </location>
</feature>
<feature type="helix" evidence="13">
    <location>
        <begin position="121"/>
        <end position="124"/>
    </location>
</feature>
<feature type="strand" evidence="13">
    <location>
        <begin position="128"/>
        <end position="134"/>
    </location>
</feature>
<feature type="strand" evidence="13">
    <location>
        <begin position="138"/>
        <end position="140"/>
    </location>
</feature>
<feature type="helix" evidence="13">
    <location>
        <begin position="145"/>
        <end position="149"/>
    </location>
</feature>
<feature type="strand" evidence="13">
    <location>
        <begin position="152"/>
        <end position="157"/>
    </location>
</feature>
<feature type="strand" evidence="13">
    <location>
        <begin position="159"/>
        <end position="161"/>
    </location>
</feature>
<feature type="strand" evidence="13">
    <location>
        <begin position="164"/>
        <end position="172"/>
    </location>
</feature>
<feature type="helix" evidence="13">
    <location>
        <begin position="176"/>
        <end position="189"/>
    </location>
</feature>
<feature type="helix" evidence="13">
    <location>
        <begin position="196"/>
        <end position="203"/>
    </location>
</feature>
<feature type="turn" evidence="13">
    <location>
        <begin position="204"/>
        <end position="209"/>
    </location>
</feature>
<feature type="helix" evidence="13">
    <location>
        <begin position="212"/>
        <end position="214"/>
    </location>
</feature>
<feature type="helix" evidence="13">
    <location>
        <begin position="218"/>
        <end position="220"/>
    </location>
</feature>
<feature type="turn" evidence="13">
    <location>
        <begin position="225"/>
        <end position="227"/>
    </location>
</feature>
<feature type="helix" evidence="13">
    <location>
        <begin position="232"/>
        <end position="237"/>
    </location>
</feature>
<feature type="helix" evidence="13">
    <location>
        <begin position="238"/>
        <end position="240"/>
    </location>
</feature>
<feature type="strand" evidence="13">
    <location>
        <begin position="242"/>
        <end position="245"/>
    </location>
</feature>
<feature type="helix" evidence="13">
    <location>
        <begin position="252"/>
        <end position="254"/>
    </location>
</feature>
<feature type="helix" evidence="13">
    <location>
        <begin position="277"/>
        <end position="290"/>
    </location>
</feature>
<feature type="helix" evidence="13">
    <location>
        <begin position="292"/>
        <end position="298"/>
    </location>
</feature>
<sequence>MSETEFHHGAQAGLELLRSSNSPTSASQSAGMTVTDQAFVTLATNDIYCQGALVLGQSLRRHRLTRKLVVLITPQVSSLLRVILSKVFDEVIEVNLIDSADYIHLAFLKRPELGLTLTKLHCWTLTHYSKCVFLDADTLVLSNVDELFDRGEFSAAPDPGWPDCFNSGVFVFQPSLHTHKLLLQHAMEHGSFDGADQGLLNSFFRNWSTTDIHKHLPFIYNLSSNTMYTYSPAFKQFGSSAKVVHFLGSMKPWNYKYNPQSGSVLEQGSASSSQHQAAFLHLWWTVYQNNVLPLYKSVQAGEARASPGHTLCHSDVGGPCADSASGVGEPCENSTPSAGVPCANSPLGSNQPAQGLPEPTQIVDETLSLPEGRRSEDMIACPETETPAVITCDPLSQPSPQPADFTETETILQPANKVESVSSEETFEPSQELPAEALRDPSLQDALEVDLAVSVSQISIEEKVKELSPEEERRKWEEGRIDYMGKDAFARIQEKLDRFLQ</sequence>
<gene>
    <name type="primary">GYG2</name>
</gene>
<comment type="function">
    <text evidence="7 8">Glycogenin participates in the glycogen biosynthetic process along with glycogen synthase and glycogen branching enzyme. It catalyzes the formation of a short alpha (1,4)-glucosyl chain covalently attached via a glucose 1-O-tyrosyl linkage to internal tyrosine residues and these chains act as primers for the elongation reaction catalyzed by glycogen synthase.</text>
</comment>
<comment type="catalytic activity">
    <reaction evidence="7 8">
        <text>L-tyrosyl-[glycogenin] + UDP-alpha-D-glucose = alpha-D-glucosyl-L-tyrosyl-[glycogenin] + UDP + H(+)</text>
        <dbReference type="Rhea" id="RHEA:23360"/>
        <dbReference type="Rhea" id="RHEA-COMP:14604"/>
        <dbReference type="Rhea" id="RHEA-COMP:14605"/>
        <dbReference type="ChEBI" id="CHEBI:15378"/>
        <dbReference type="ChEBI" id="CHEBI:46858"/>
        <dbReference type="ChEBI" id="CHEBI:58223"/>
        <dbReference type="ChEBI" id="CHEBI:58885"/>
        <dbReference type="ChEBI" id="CHEBI:140573"/>
        <dbReference type="EC" id="2.4.1.186"/>
    </reaction>
    <physiologicalReaction direction="left-to-right" evidence="7 8">
        <dbReference type="Rhea" id="RHEA:23361"/>
    </physiologicalReaction>
</comment>
<comment type="catalytic activity">
    <reaction evidence="7 8">
        <text>[1,4-alpha-D-glucosyl](n)-L-tyrosyl-[glycogenin] + UDP-alpha-D-glucose = [1,4-alpha-D-glucosyl](n+1)-L-tyrosyl-[glycogenin] + UDP + H(+)</text>
        <dbReference type="Rhea" id="RHEA:56560"/>
        <dbReference type="Rhea" id="RHEA-COMP:14606"/>
        <dbReference type="Rhea" id="RHEA-COMP:14607"/>
        <dbReference type="ChEBI" id="CHEBI:15378"/>
        <dbReference type="ChEBI" id="CHEBI:58223"/>
        <dbReference type="ChEBI" id="CHEBI:58885"/>
        <dbReference type="ChEBI" id="CHEBI:140574"/>
        <dbReference type="EC" id="2.4.1.186"/>
    </reaction>
    <physiologicalReaction direction="left-to-right" evidence="7 8">
        <dbReference type="Rhea" id="RHEA:56561"/>
    </physiologicalReaction>
</comment>
<comment type="cofactor">
    <cofactor evidence="3">
        <name>Mn(2+)</name>
        <dbReference type="ChEBI" id="CHEBI:29035"/>
    </cofactor>
</comment>
<comment type="pathway">
    <text evidence="7 8">Glycan biosynthesis; glycogen biosynthesis.</text>
</comment>
<comment type="subunit">
    <text>Homodimer, tightly complexed to glycogen synthase.</text>
</comment>
<comment type="interaction">
    <interactant intactId="EBI-752192">
        <id>O15488</id>
    </interactant>
    <interactant intactId="EBI-740553">
        <id>P13807</id>
        <label>GYS1</label>
    </interactant>
    <organismsDiffer>false</organismsDiffer>
    <experiments>6</experiments>
</comment>
<comment type="subcellular location">
    <subcellularLocation>
        <location evidence="2">Cytoplasm</location>
    </subcellularLocation>
    <subcellularLocation>
        <location evidence="2">Nucleus</location>
    </subcellularLocation>
    <text evidence="1 2">Localizes to glycogen granules (glycosomes) in the cytoplasm (By similarity). Cytosolic localization is dependent on the actin cytoskeleton (By similarity).</text>
</comment>
<comment type="alternative products">
    <event type="alternative splicing"/>
    <isoform>
        <id>O15488-1</id>
        <name>Alpha</name>
        <sequence type="displayed"/>
    </isoform>
    <isoform>
        <id>O15488-2</id>
        <name>Beta</name>
        <sequence type="described" ref="VSP_001770"/>
    </isoform>
    <isoform>
        <id>O15488-3</id>
        <name>Gamma</name>
        <sequence type="described" ref="VSP_001771"/>
    </isoform>
    <isoform>
        <id>O15488-4</id>
        <name>Delta</name>
        <sequence type="described" ref="VSP_001772"/>
    </isoform>
    <isoform>
        <id>O15488-5</id>
        <name>Epsilon</name>
        <sequence type="described" ref="VSP_001773"/>
    </isoform>
    <isoform>
        <id>O15488-6</id>
        <name>Zeta</name>
        <sequence type="described" ref="VSP_001774"/>
    </isoform>
    <text>Additional isoforms seem to exist.</text>
</comment>
<comment type="tissue specificity">
    <text evidence="7 8">Detected in liver (at protein level) (PubMed:9857012). Expressed preferentially in liver, heart, and pancreas (PubMed:9346895).</text>
</comment>
<comment type="PTM">
    <text evidence="8">Self-glycosylated by the transfer of glucose residues from UDP-glucose to itself, forming an alpha-1,4-glycan of around 10 residues attached to Tyr-228.</text>
</comment>
<comment type="mass spectrometry"/>
<comment type="similarity">
    <text evidence="10">Belongs to the glycosyltransferase 8 family. Glycogenin subfamily.</text>
</comment>
<dbReference type="EC" id="2.4.1.186" evidence="7 8"/>
<dbReference type="EMBL" id="U94362">
    <property type="protein sequence ID" value="AAB84377.1"/>
    <property type="molecule type" value="mRNA"/>
</dbReference>
<dbReference type="EMBL" id="U94363">
    <property type="protein sequence ID" value="AAB84378.1"/>
    <property type="molecule type" value="mRNA"/>
</dbReference>
<dbReference type="EMBL" id="U94364">
    <property type="protein sequence ID" value="AAB84379.1"/>
    <property type="molecule type" value="mRNA"/>
</dbReference>
<dbReference type="EMBL" id="U94357">
    <property type="protein sequence ID" value="AAB84373.1"/>
    <property type="molecule type" value="mRNA"/>
</dbReference>
<dbReference type="EMBL" id="U94358">
    <property type="protein sequence ID" value="AAB84374.1"/>
    <property type="molecule type" value="mRNA"/>
</dbReference>
<dbReference type="EMBL" id="U94360">
    <property type="protein sequence ID" value="AAB84375.1"/>
    <property type="molecule type" value="mRNA"/>
</dbReference>
<dbReference type="EMBL" id="U94361">
    <property type="protein sequence ID" value="AAB84376.1"/>
    <property type="molecule type" value="mRNA"/>
</dbReference>
<dbReference type="EMBL" id="AF179624">
    <property type="protein sequence ID" value="AAF61855.1"/>
    <property type="molecule type" value="Genomic_DNA"/>
</dbReference>
<dbReference type="EMBL" id="AF179615">
    <property type="protein sequence ID" value="AAF61855.1"/>
    <property type="status" value="JOINED"/>
    <property type="molecule type" value="Genomic_DNA"/>
</dbReference>
<dbReference type="EMBL" id="AF179616">
    <property type="protein sequence ID" value="AAF61855.1"/>
    <property type="status" value="JOINED"/>
    <property type="molecule type" value="Genomic_DNA"/>
</dbReference>
<dbReference type="EMBL" id="AF179617">
    <property type="protein sequence ID" value="AAF61855.1"/>
    <property type="status" value="JOINED"/>
    <property type="molecule type" value="Genomic_DNA"/>
</dbReference>
<dbReference type="EMBL" id="AF179618">
    <property type="protein sequence ID" value="AAF61855.1"/>
    <property type="status" value="JOINED"/>
    <property type="molecule type" value="Genomic_DNA"/>
</dbReference>
<dbReference type="EMBL" id="AF179619">
    <property type="protein sequence ID" value="AAF61855.1"/>
    <property type="status" value="JOINED"/>
    <property type="molecule type" value="Genomic_DNA"/>
</dbReference>
<dbReference type="EMBL" id="AF179620">
    <property type="protein sequence ID" value="AAF61855.1"/>
    <property type="status" value="JOINED"/>
    <property type="molecule type" value="Genomic_DNA"/>
</dbReference>
<dbReference type="EMBL" id="AF179621">
    <property type="protein sequence ID" value="AAF61855.1"/>
    <property type="status" value="JOINED"/>
    <property type="molecule type" value="Genomic_DNA"/>
</dbReference>
<dbReference type="EMBL" id="AF179622">
    <property type="protein sequence ID" value="AAF61855.1"/>
    <property type="status" value="JOINED"/>
    <property type="molecule type" value="Genomic_DNA"/>
</dbReference>
<dbReference type="EMBL" id="AF179623">
    <property type="protein sequence ID" value="AAF61855.1"/>
    <property type="status" value="JOINED"/>
    <property type="molecule type" value="Genomic_DNA"/>
</dbReference>
<dbReference type="EMBL" id="AC138085">
    <property type="status" value="NOT_ANNOTATED_CDS"/>
    <property type="molecule type" value="Genomic_DNA"/>
</dbReference>
<dbReference type="EMBL" id="BC023152">
    <property type="protein sequence ID" value="AAH23152.1"/>
    <property type="molecule type" value="mRNA"/>
</dbReference>
<dbReference type="CCDS" id="CCDS14121.1">
    <molecule id="O15488-1"/>
</dbReference>
<dbReference type="CCDS" id="CCDS48074.1">
    <molecule id="O15488-2"/>
</dbReference>
<dbReference type="CCDS" id="CCDS55365.1">
    <molecule id="O15488-4"/>
</dbReference>
<dbReference type="RefSeq" id="NP_001073324.1">
    <molecule id="O15488-2"/>
    <property type="nucleotide sequence ID" value="NM_001079855.2"/>
</dbReference>
<dbReference type="RefSeq" id="NP_001171631.1">
    <property type="nucleotide sequence ID" value="NM_001184702.1"/>
</dbReference>
<dbReference type="RefSeq" id="NP_001171632.1">
    <molecule id="O15488-4"/>
    <property type="nucleotide sequence ID" value="NM_001184703.2"/>
</dbReference>
<dbReference type="RefSeq" id="NP_001171633.1">
    <property type="nucleotide sequence ID" value="NM_001184704.1"/>
</dbReference>
<dbReference type="RefSeq" id="NP_003909.2">
    <molecule id="O15488-1"/>
    <property type="nucleotide sequence ID" value="NM_003918.3"/>
</dbReference>
<dbReference type="RefSeq" id="XP_011543902.1">
    <molecule id="O15488-2"/>
    <property type="nucleotide sequence ID" value="XM_011545600.3"/>
</dbReference>
<dbReference type="RefSeq" id="XP_016885416.1">
    <molecule id="O15488-1"/>
    <property type="nucleotide sequence ID" value="XM_017029927.2"/>
</dbReference>
<dbReference type="RefSeq" id="XP_016885417.1">
    <molecule id="O15488-1"/>
    <property type="nucleotide sequence ID" value="XM_017029928.2"/>
</dbReference>
<dbReference type="RefSeq" id="XP_047298565.1">
    <molecule id="O15488-2"/>
    <property type="nucleotide sequence ID" value="XM_047442609.1"/>
</dbReference>
<dbReference type="RefSeq" id="XP_047298568.1">
    <molecule id="O15488-4"/>
    <property type="nucleotide sequence ID" value="XM_047442612.1"/>
</dbReference>
<dbReference type="PDB" id="4UEG">
    <property type="method" value="X-ray"/>
    <property type="resolution" value="1.93 A"/>
    <property type="chains" value="A/B=35-300"/>
</dbReference>
<dbReference type="PDBsum" id="4UEG"/>
<dbReference type="SMR" id="O15488"/>
<dbReference type="BioGRID" id="114422">
    <property type="interactions" value="30"/>
</dbReference>
<dbReference type="FunCoup" id="O15488">
    <property type="interactions" value="523"/>
</dbReference>
<dbReference type="IntAct" id="O15488">
    <property type="interactions" value="27"/>
</dbReference>
<dbReference type="STRING" id="9606.ENSP00000370555"/>
<dbReference type="CAZy" id="GT8">
    <property type="family name" value="Glycosyltransferase Family 8"/>
</dbReference>
<dbReference type="GlyCosmos" id="O15488">
    <property type="glycosylation" value="1 site, No reported glycans"/>
</dbReference>
<dbReference type="GlyGen" id="O15488">
    <property type="glycosylation" value="1 site"/>
</dbReference>
<dbReference type="iPTMnet" id="O15488"/>
<dbReference type="PhosphoSitePlus" id="O15488"/>
<dbReference type="BioMuta" id="GYG2"/>
<dbReference type="jPOST" id="O15488"/>
<dbReference type="MassIVE" id="O15488"/>
<dbReference type="PaxDb" id="9606-ENSP00000370555"/>
<dbReference type="PeptideAtlas" id="O15488"/>
<dbReference type="ProteomicsDB" id="48689">
    <molecule id="O15488-1"/>
</dbReference>
<dbReference type="ProteomicsDB" id="48690">
    <molecule id="O15488-2"/>
</dbReference>
<dbReference type="ProteomicsDB" id="48691">
    <molecule id="O15488-3"/>
</dbReference>
<dbReference type="ProteomicsDB" id="48692">
    <molecule id="O15488-4"/>
</dbReference>
<dbReference type="ProteomicsDB" id="48693">
    <molecule id="O15488-5"/>
</dbReference>
<dbReference type="ProteomicsDB" id="48694">
    <molecule id="O15488-6"/>
</dbReference>
<dbReference type="Pumba" id="O15488"/>
<dbReference type="Antibodypedia" id="486">
    <property type="antibodies" value="172 antibodies from 26 providers"/>
</dbReference>
<dbReference type="DNASU" id="8908"/>
<dbReference type="Ensembl" id="ENST00000353656.10">
    <molecule id="O15488-4"/>
    <property type="protein sequence ID" value="ENSP00000487294.1"/>
    <property type="gene ID" value="ENSG00000056998.21"/>
</dbReference>
<dbReference type="Ensembl" id="ENST00000381163.7">
    <molecule id="O15488-1"/>
    <property type="protein sequence ID" value="ENSP00000370555.3"/>
    <property type="gene ID" value="ENSG00000056998.21"/>
</dbReference>
<dbReference type="Ensembl" id="ENST00000398806.8">
    <molecule id="O15488-2"/>
    <property type="protein sequence ID" value="ENSP00000381786.3"/>
    <property type="gene ID" value="ENSG00000056998.21"/>
</dbReference>
<dbReference type="GeneID" id="8908"/>
<dbReference type="KEGG" id="hsa:8908"/>
<dbReference type="MANE-Select" id="ENST00000398806.8">
    <molecule id="O15488-2"/>
    <property type="protein sequence ID" value="ENSP00000381786.3"/>
    <property type="RefSeq nucleotide sequence ID" value="NM_001079855.2"/>
    <property type="RefSeq protein sequence ID" value="NP_001073324.1"/>
</dbReference>
<dbReference type="UCSC" id="uc004cqs.2">
    <molecule id="O15488-1"/>
    <property type="organism name" value="human"/>
</dbReference>
<dbReference type="AGR" id="HGNC:4700"/>
<dbReference type="CTD" id="8908"/>
<dbReference type="DisGeNET" id="8908"/>
<dbReference type="GeneCards" id="GYG2"/>
<dbReference type="HGNC" id="HGNC:4700">
    <property type="gene designation" value="GYG2"/>
</dbReference>
<dbReference type="HPA" id="ENSG00000056998">
    <property type="expression patterns" value="Tissue enriched (adipose)"/>
</dbReference>
<dbReference type="MalaCards" id="GYG2"/>
<dbReference type="MIM" id="300198">
    <property type="type" value="gene"/>
</dbReference>
<dbReference type="neXtProt" id="NX_O15488"/>
<dbReference type="OpenTargets" id="ENSG00000056998"/>
<dbReference type="PharmGKB" id="PA29078"/>
<dbReference type="VEuPathDB" id="HostDB:ENSG00000056998"/>
<dbReference type="eggNOG" id="KOG1950">
    <property type="taxonomic scope" value="Eukaryota"/>
</dbReference>
<dbReference type="GeneTree" id="ENSGT00940000161628"/>
<dbReference type="InParanoid" id="O15488"/>
<dbReference type="OMA" id="NDTYCQG"/>
<dbReference type="OrthoDB" id="2014201at2759"/>
<dbReference type="PAN-GO" id="O15488">
    <property type="GO annotations" value="2 GO annotations based on evolutionary models"/>
</dbReference>
<dbReference type="PhylomeDB" id="O15488"/>
<dbReference type="TreeFam" id="TF312839"/>
<dbReference type="BioCyc" id="MetaCyc:HS00703-MONOMER"/>
<dbReference type="BRENDA" id="2.4.1.186">
    <property type="organism ID" value="2681"/>
</dbReference>
<dbReference type="PathwayCommons" id="O15488"/>
<dbReference type="Reactome" id="R-HSA-3322077">
    <property type="pathway name" value="Glycogen synthesis"/>
</dbReference>
<dbReference type="Reactome" id="R-HSA-3858516">
    <property type="pathway name" value="Glycogen storage disease type 0 (liver GYS2)"/>
</dbReference>
<dbReference type="Reactome" id="R-HSA-3878781">
    <property type="pathway name" value="Glycogen storage disease type IV (GBE1)"/>
</dbReference>
<dbReference type="Reactome" id="R-HSA-70221">
    <property type="pathway name" value="Glycogen breakdown (glycogenolysis)"/>
</dbReference>
<dbReference type="SignaLink" id="O15488"/>
<dbReference type="UniPathway" id="UPA00164"/>
<dbReference type="BioGRID-ORCS" id="8908">
    <property type="hits" value="12 hits in 783 CRISPR screens"/>
</dbReference>
<dbReference type="ChiTaRS" id="GYG2">
    <property type="organism name" value="human"/>
</dbReference>
<dbReference type="EvolutionaryTrace" id="O15488"/>
<dbReference type="GenomeRNAi" id="8908"/>
<dbReference type="Pharos" id="O15488">
    <property type="development level" value="Tbio"/>
</dbReference>
<dbReference type="PRO" id="PR:O15488"/>
<dbReference type="Proteomes" id="UP000005640">
    <property type="component" value="Chromosome X"/>
</dbReference>
<dbReference type="RNAct" id="O15488">
    <property type="molecule type" value="protein"/>
</dbReference>
<dbReference type="Bgee" id="ENSG00000056998">
    <property type="expression patterns" value="Expressed in adipose tissue and 129 other cell types or tissues"/>
</dbReference>
<dbReference type="ExpressionAtlas" id="O15488">
    <property type="expression patterns" value="baseline and differential"/>
</dbReference>
<dbReference type="GO" id="GO:0005737">
    <property type="term" value="C:cytoplasm"/>
    <property type="evidence" value="ECO:0000250"/>
    <property type="project" value="UniProtKB"/>
</dbReference>
<dbReference type="GO" id="GO:0005829">
    <property type="term" value="C:cytosol"/>
    <property type="evidence" value="ECO:0000304"/>
    <property type="project" value="Reactome"/>
</dbReference>
<dbReference type="GO" id="GO:0005634">
    <property type="term" value="C:nucleus"/>
    <property type="evidence" value="ECO:0007669"/>
    <property type="project" value="UniProtKB-SubCell"/>
</dbReference>
<dbReference type="GO" id="GO:0008466">
    <property type="term" value="F:glycogenin glucosyltransferase activity"/>
    <property type="evidence" value="ECO:0000314"/>
    <property type="project" value="UniProtKB"/>
</dbReference>
<dbReference type="GO" id="GO:0016757">
    <property type="term" value="F:glycosyltransferase activity"/>
    <property type="evidence" value="ECO:0000318"/>
    <property type="project" value="GO_Central"/>
</dbReference>
<dbReference type="GO" id="GO:0046872">
    <property type="term" value="F:metal ion binding"/>
    <property type="evidence" value="ECO:0007669"/>
    <property type="project" value="UniProtKB-KW"/>
</dbReference>
<dbReference type="GO" id="GO:0005978">
    <property type="term" value="P:glycogen biosynthetic process"/>
    <property type="evidence" value="ECO:0000314"/>
    <property type="project" value="UniProtKB"/>
</dbReference>
<dbReference type="CDD" id="cd02537">
    <property type="entry name" value="GT8_Glycogenin"/>
    <property type="match status" value="1"/>
</dbReference>
<dbReference type="FunFam" id="3.90.550.10:FF:000025">
    <property type="entry name" value="Glycogenin-1 isoform 1"/>
    <property type="match status" value="1"/>
</dbReference>
<dbReference type="Gene3D" id="3.90.550.10">
    <property type="entry name" value="Spore Coat Polysaccharide Biosynthesis Protein SpsA, Chain A"/>
    <property type="match status" value="1"/>
</dbReference>
<dbReference type="InterPro" id="IPR002495">
    <property type="entry name" value="Glyco_trans_8"/>
</dbReference>
<dbReference type="InterPro" id="IPR050587">
    <property type="entry name" value="GNT1/Glycosyltrans_8"/>
</dbReference>
<dbReference type="InterPro" id="IPR029044">
    <property type="entry name" value="Nucleotide-diphossugar_trans"/>
</dbReference>
<dbReference type="PANTHER" id="PTHR11183">
    <property type="entry name" value="GLYCOGENIN SUBFAMILY MEMBER"/>
    <property type="match status" value="1"/>
</dbReference>
<dbReference type="Pfam" id="PF01501">
    <property type="entry name" value="Glyco_transf_8"/>
    <property type="match status" value="1"/>
</dbReference>
<dbReference type="SUPFAM" id="SSF53448">
    <property type="entry name" value="Nucleotide-diphospho-sugar transferases"/>
    <property type="match status" value="1"/>
</dbReference>
<keyword id="KW-0002">3D-structure</keyword>
<keyword id="KW-0025">Alternative splicing</keyword>
<keyword id="KW-0963">Cytoplasm</keyword>
<keyword id="KW-0320">Glycogen biosynthesis</keyword>
<keyword id="KW-0325">Glycoprotein</keyword>
<keyword id="KW-0464">Manganese</keyword>
<keyword id="KW-0479">Metal-binding</keyword>
<keyword id="KW-0539">Nucleus</keyword>
<keyword id="KW-0597">Phosphoprotein</keyword>
<keyword id="KW-1267">Proteomics identification</keyword>
<keyword id="KW-1185">Reference proteome</keyword>
<keyword id="KW-0808">Transferase</keyword>
<evidence type="ECO:0000250" key="1">
    <source>
        <dbReference type="UniProtKB" id="C4R941"/>
    </source>
</evidence>
<evidence type="ECO:0000250" key="2">
    <source>
        <dbReference type="UniProtKB" id="P13280"/>
    </source>
</evidence>
<evidence type="ECO:0000250" key="3">
    <source>
        <dbReference type="UniProtKB" id="P46976"/>
    </source>
</evidence>
<evidence type="ECO:0000269" key="4">
    <source>
    </source>
</evidence>
<evidence type="ECO:0000269" key="5">
    <source>
    </source>
</evidence>
<evidence type="ECO:0000269" key="6">
    <source>
    </source>
</evidence>
<evidence type="ECO:0000269" key="7">
    <source>
    </source>
</evidence>
<evidence type="ECO:0000269" key="8">
    <source>
    </source>
</evidence>
<evidence type="ECO:0000303" key="9">
    <source>
    </source>
</evidence>
<evidence type="ECO:0000305" key="10"/>
<evidence type="ECO:0007744" key="11">
    <source>
        <dbReference type="PDB" id="4UEG"/>
    </source>
</evidence>
<evidence type="ECO:0007744" key="12">
    <source>
    </source>
</evidence>
<evidence type="ECO:0007829" key="13">
    <source>
        <dbReference type="PDB" id="4UEG"/>
    </source>
</evidence>
<protein>
    <recommendedName>
        <fullName>Glycogenin-2</fullName>
        <shortName>GN-2</shortName>
        <shortName>GN2</shortName>
        <ecNumber evidence="7 8">2.4.1.186</ecNumber>
    </recommendedName>
</protein>
<name>GLYG2_HUMAN</name>
<accession>O15488</accession>
<accession>B7WNN6</accession>
<accession>O15485</accession>
<accession>O15486</accession>
<accession>O15487</accession>
<accession>O15489</accession>
<accession>O15490</accession>
<organism>
    <name type="scientific">Homo sapiens</name>
    <name type="common">Human</name>
    <dbReference type="NCBI Taxonomy" id="9606"/>
    <lineage>
        <taxon>Eukaryota</taxon>
        <taxon>Metazoa</taxon>
        <taxon>Chordata</taxon>
        <taxon>Craniata</taxon>
        <taxon>Vertebrata</taxon>
        <taxon>Euteleostomi</taxon>
        <taxon>Mammalia</taxon>
        <taxon>Eutheria</taxon>
        <taxon>Euarchontoglires</taxon>
        <taxon>Primates</taxon>
        <taxon>Haplorrhini</taxon>
        <taxon>Catarrhini</taxon>
        <taxon>Hominidae</taxon>
        <taxon>Homo</taxon>
    </lineage>
</organism>